<comment type="catalytic activity">
    <reaction>
        <text>L-seryl-[protein] + ATP = O-phospho-L-seryl-[protein] + ADP + H(+)</text>
        <dbReference type="Rhea" id="RHEA:17989"/>
        <dbReference type="Rhea" id="RHEA-COMP:9863"/>
        <dbReference type="Rhea" id="RHEA-COMP:11604"/>
        <dbReference type="ChEBI" id="CHEBI:15378"/>
        <dbReference type="ChEBI" id="CHEBI:29999"/>
        <dbReference type="ChEBI" id="CHEBI:30616"/>
        <dbReference type="ChEBI" id="CHEBI:83421"/>
        <dbReference type="ChEBI" id="CHEBI:456216"/>
        <dbReference type="EC" id="2.7.11.1"/>
    </reaction>
</comment>
<comment type="catalytic activity">
    <reaction>
        <text>L-threonyl-[protein] + ATP = O-phospho-L-threonyl-[protein] + ADP + H(+)</text>
        <dbReference type="Rhea" id="RHEA:46608"/>
        <dbReference type="Rhea" id="RHEA-COMP:11060"/>
        <dbReference type="Rhea" id="RHEA-COMP:11605"/>
        <dbReference type="ChEBI" id="CHEBI:15378"/>
        <dbReference type="ChEBI" id="CHEBI:30013"/>
        <dbReference type="ChEBI" id="CHEBI:30616"/>
        <dbReference type="ChEBI" id="CHEBI:61977"/>
        <dbReference type="ChEBI" id="CHEBI:456216"/>
        <dbReference type="EC" id="2.7.11.1"/>
    </reaction>
</comment>
<comment type="similarity">
    <text evidence="1">Belongs to the protein kinase superfamily. Ser/Thr protein kinase family.</text>
</comment>
<organism>
    <name type="scientific">Invertebrate iridescent virus 6</name>
    <name type="common">IIV-6</name>
    <name type="synonym">Chilo iridescent virus</name>
    <dbReference type="NCBI Taxonomy" id="176652"/>
    <lineage>
        <taxon>Viruses</taxon>
        <taxon>Varidnaviria</taxon>
        <taxon>Bamfordvirae</taxon>
        <taxon>Nucleocytoviricota</taxon>
        <taxon>Megaviricetes</taxon>
        <taxon>Pimascovirales</taxon>
        <taxon>Iridoviridae</taxon>
        <taxon>Betairidovirinae</taxon>
        <taxon>Iridovirus</taxon>
    </lineage>
</organism>
<protein>
    <recommendedName>
        <fullName>Probable serine/threonine-protein kinase 380R</fullName>
        <ecNumber>2.7.11.1</ecNumber>
    </recommendedName>
</protein>
<proteinExistence type="inferred from homology"/>
<sequence>MNFDKEKCDEWEKIRLNSSPKNPFTKRNVKKDGPTYKKIDLICKHNVVGGNVVDLNKLCLKWLKDNHPNVKIPKSKSPPKVKSPKRKKSPVRRRVSSPLLTDDEDDVLNLQYDYLLSYRSVASEEITNYLRQTINDKTITAGNACMSNTKTLLKYFTNVKAVGKGSFGTVYIGNINIKNNVFSIAIKEGQISGLEANRAKKLQFPVEYLFNQMMNNILNNKMCPSFNYTYCIHFCDHCEVVSAIFKNPKTKSKITTCSVTMVEKADSDLIGLTSLDAQLSALFQILAAVHCIHKLYGIQHCDIKIENVLKKNIPKQANEYFRYSLDGVNYFVPNTGFVAILNDFGVSFSTSPKISTSYFGVRNAKVVFNNNSYKFQSFTTQRYPQENKWGKIETLSPPPRLRGPGGAKLTLNKFMKNFDSKPSIFVDLEDFQKFPTFGMYQDIQDVVRMFVGGKQTVQPGSHTEMRGLQPQAKKAILPFVEKLAPTSIWPEDKVELFLANVLIHKIFTQFGYTNAPPNAIILETYKLP</sequence>
<keyword id="KW-0067">ATP-binding</keyword>
<keyword id="KW-0418">Kinase</keyword>
<keyword id="KW-0547">Nucleotide-binding</keyword>
<keyword id="KW-1185">Reference proteome</keyword>
<keyword id="KW-0723">Serine/threonine-protein kinase</keyword>
<keyword id="KW-0808">Transferase</keyword>
<gene>
    <name type="ORF">IIV6-380R</name>
</gene>
<organismHost>
    <name type="scientific">Acheta domesticus</name>
    <name type="common">House cricket</name>
    <dbReference type="NCBI Taxonomy" id="6997"/>
</organismHost>
<organismHost>
    <name type="scientific">Chilo suppressalis</name>
    <name type="common">Asiatic rice borer moth</name>
    <dbReference type="NCBI Taxonomy" id="168631"/>
</organismHost>
<organismHost>
    <name type="scientific">Gryllus bimaculatus</name>
    <name type="common">Two-spotted cricket</name>
    <dbReference type="NCBI Taxonomy" id="6999"/>
</organismHost>
<organismHost>
    <name type="scientific">Gryllus campestris</name>
    <dbReference type="NCBI Taxonomy" id="58607"/>
</organismHost>
<organismHost>
    <name type="scientific">Spodoptera frugiperda</name>
    <name type="common">Fall armyworm</name>
    <dbReference type="NCBI Taxonomy" id="7108"/>
</organismHost>
<evidence type="ECO:0000255" key="1">
    <source>
        <dbReference type="PROSITE-ProRule" id="PRU00159"/>
    </source>
</evidence>
<evidence type="ECO:0000256" key="2">
    <source>
        <dbReference type="SAM" id="MobiDB-lite"/>
    </source>
</evidence>
<dbReference type="EC" id="2.7.11.1"/>
<dbReference type="EMBL" id="AF303741">
    <property type="protein sequence ID" value="AAK82240.1"/>
    <property type="molecule type" value="Genomic_DNA"/>
</dbReference>
<dbReference type="RefSeq" id="NP_149843.1">
    <property type="nucleotide sequence ID" value="NC_003038.1"/>
</dbReference>
<dbReference type="KEGG" id="vg:1733084"/>
<dbReference type="OrthoDB" id="10019at10239"/>
<dbReference type="Proteomes" id="UP000001359">
    <property type="component" value="Genome"/>
</dbReference>
<dbReference type="GO" id="GO:0005524">
    <property type="term" value="F:ATP binding"/>
    <property type="evidence" value="ECO:0007669"/>
    <property type="project" value="UniProtKB-KW"/>
</dbReference>
<dbReference type="GO" id="GO:0072354">
    <property type="term" value="F:histone H3T3 kinase activity"/>
    <property type="evidence" value="ECO:0007669"/>
    <property type="project" value="TreeGrafter"/>
</dbReference>
<dbReference type="GO" id="GO:0106310">
    <property type="term" value="F:protein serine kinase activity"/>
    <property type="evidence" value="ECO:0007669"/>
    <property type="project" value="RHEA"/>
</dbReference>
<dbReference type="GO" id="GO:0035556">
    <property type="term" value="P:intracellular signal transduction"/>
    <property type="evidence" value="ECO:0007669"/>
    <property type="project" value="TreeGrafter"/>
</dbReference>
<dbReference type="Gene3D" id="1.10.510.10">
    <property type="entry name" value="Transferase(Phosphotransferase) domain 1"/>
    <property type="match status" value="1"/>
</dbReference>
<dbReference type="InterPro" id="IPR014901">
    <property type="entry name" value="2-cysteine_adaptor"/>
</dbReference>
<dbReference type="InterPro" id="IPR011009">
    <property type="entry name" value="Kinase-like_dom_sf"/>
</dbReference>
<dbReference type="InterPro" id="IPR000719">
    <property type="entry name" value="Prot_kinase_dom"/>
</dbReference>
<dbReference type="InterPro" id="IPR017441">
    <property type="entry name" value="Protein_kinase_ATP_BS"/>
</dbReference>
<dbReference type="PANTHER" id="PTHR24419">
    <property type="entry name" value="INTERLEUKIN-1 RECEPTOR-ASSOCIATED KINASE"/>
    <property type="match status" value="1"/>
</dbReference>
<dbReference type="PANTHER" id="PTHR24419:SF18">
    <property type="entry name" value="SERINE_THREONINE-PROTEIN KINASE HASPIN"/>
    <property type="match status" value="1"/>
</dbReference>
<dbReference type="Pfam" id="PF08793">
    <property type="entry name" value="2C_adapt"/>
    <property type="match status" value="1"/>
</dbReference>
<dbReference type="SUPFAM" id="SSF56112">
    <property type="entry name" value="Protein kinase-like (PK-like)"/>
    <property type="match status" value="1"/>
</dbReference>
<dbReference type="PROSITE" id="PS00107">
    <property type="entry name" value="PROTEIN_KINASE_ATP"/>
    <property type="match status" value="1"/>
</dbReference>
<dbReference type="PROSITE" id="PS50011">
    <property type="entry name" value="PROTEIN_KINASE_DOM"/>
    <property type="match status" value="1"/>
</dbReference>
<reference key="1">
    <citation type="journal article" date="2001" name="Virology">
        <title>Analysis of the first complete DNA sequence of an invertebrate iridovirus: coding strategy of the genome of Chilo iridescent virus.</title>
        <authorList>
            <person name="Jakob N.J."/>
            <person name="Mueller K."/>
            <person name="Bahr U."/>
            <person name="Darai G."/>
        </authorList>
    </citation>
    <scope>NUCLEOTIDE SEQUENCE [LARGE SCALE GENOMIC DNA]</scope>
</reference>
<reference key="2">
    <citation type="journal article" date="2007" name="Virol. J.">
        <title>Comparative genomic analysis of the family Iridoviridae: re-annotating and defining the core set of iridovirus genes.</title>
        <authorList>
            <person name="Eaton H.E."/>
            <person name="Metcalf J."/>
            <person name="Penny E."/>
            <person name="Tcherepanov V."/>
            <person name="Upton C."/>
            <person name="Brunetti C.R."/>
        </authorList>
    </citation>
    <scope>GENOME REANNOTATION</scope>
</reference>
<name>VF380_IIV6</name>
<feature type="chain" id="PRO_0000376912" description="Probable serine/threonine-protein kinase 380R">
    <location>
        <begin position="1"/>
        <end position="528"/>
    </location>
</feature>
<feature type="domain" description="Protein kinase" evidence="1">
    <location>
        <begin position="156"/>
        <end position="507"/>
    </location>
</feature>
<feature type="region of interest" description="Disordered" evidence="2">
    <location>
        <begin position="70"/>
        <end position="96"/>
    </location>
</feature>
<feature type="compositionally biased region" description="Basic residues" evidence="2">
    <location>
        <begin position="73"/>
        <end position="95"/>
    </location>
</feature>
<feature type="active site" description="Proton acceptor" evidence="1">
    <location>
        <position position="302"/>
    </location>
</feature>
<feature type="binding site" evidence="1">
    <location>
        <begin position="162"/>
        <end position="170"/>
    </location>
    <ligand>
        <name>ATP</name>
        <dbReference type="ChEBI" id="CHEBI:30616"/>
    </ligand>
</feature>
<feature type="binding site" evidence="1">
    <location>
        <position position="187"/>
    </location>
    <ligand>
        <name>ATP</name>
        <dbReference type="ChEBI" id="CHEBI:30616"/>
    </ligand>
</feature>
<accession>Q91FE4</accession>